<reference key="1">
    <citation type="journal article" date="2002" name="Proc. Natl. Acad. Sci. U.S.A.">
        <title>The Brucella suis genome reveals fundamental similarities between animal and plant pathogens and symbionts.</title>
        <authorList>
            <person name="Paulsen I.T."/>
            <person name="Seshadri R."/>
            <person name="Nelson K.E."/>
            <person name="Eisen J.A."/>
            <person name="Heidelberg J.F."/>
            <person name="Read T.D."/>
            <person name="Dodson R.J."/>
            <person name="Umayam L.A."/>
            <person name="Brinkac L.M."/>
            <person name="Beanan M.J."/>
            <person name="Daugherty S.C."/>
            <person name="DeBoy R.T."/>
            <person name="Durkin A.S."/>
            <person name="Kolonay J.F."/>
            <person name="Madupu R."/>
            <person name="Nelson W.C."/>
            <person name="Ayodeji B."/>
            <person name="Kraul M."/>
            <person name="Shetty J."/>
            <person name="Malek J.A."/>
            <person name="Van Aken S.E."/>
            <person name="Riedmuller S."/>
            <person name="Tettelin H."/>
            <person name="Gill S.R."/>
            <person name="White O."/>
            <person name="Salzberg S.L."/>
            <person name="Hoover D.L."/>
            <person name="Lindler L.E."/>
            <person name="Halling S.M."/>
            <person name="Boyle S.M."/>
            <person name="Fraser C.M."/>
        </authorList>
    </citation>
    <scope>NUCLEOTIDE SEQUENCE [LARGE SCALE GENOMIC DNA]</scope>
    <source>
        <strain>1330</strain>
    </source>
</reference>
<reference key="2">
    <citation type="journal article" date="2011" name="J. Bacteriol.">
        <title>Revised genome sequence of Brucella suis 1330.</title>
        <authorList>
            <person name="Tae H."/>
            <person name="Shallom S."/>
            <person name="Settlage R."/>
            <person name="Preston D."/>
            <person name="Adams L.G."/>
            <person name="Garner H.R."/>
        </authorList>
    </citation>
    <scope>NUCLEOTIDE SEQUENCE [LARGE SCALE GENOMIC DNA]</scope>
    <source>
        <strain>1330</strain>
    </source>
</reference>
<dbReference type="EC" id="2.7.7.38" evidence="1"/>
<dbReference type="EMBL" id="AE014291">
    <property type="protein sequence ID" value="AAN28995.1"/>
    <property type="molecule type" value="Genomic_DNA"/>
</dbReference>
<dbReference type="EMBL" id="CP002997">
    <property type="protein sequence ID" value="AEM17407.1"/>
    <property type="molecule type" value="Genomic_DNA"/>
</dbReference>
<dbReference type="RefSeq" id="WP_006133051.1">
    <property type="nucleotide sequence ID" value="NZ_KN046804.1"/>
</dbReference>
<dbReference type="SMR" id="Q8G3B2"/>
<dbReference type="KEGG" id="bms:BR0038"/>
<dbReference type="KEGG" id="bsi:BS1330_I0038"/>
<dbReference type="PATRIC" id="fig|204722.21.peg.3006"/>
<dbReference type="HOGENOM" id="CLU_065038_0_1_5"/>
<dbReference type="PhylomeDB" id="Q8G3B2"/>
<dbReference type="UniPathway" id="UPA00030"/>
<dbReference type="UniPathway" id="UPA00358">
    <property type="reaction ID" value="UER00476"/>
</dbReference>
<dbReference type="Proteomes" id="UP000007104">
    <property type="component" value="Chromosome I"/>
</dbReference>
<dbReference type="GO" id="GO:0005829">
    <property type="term" value="C:cytosol"/>
    <property type="evidence" value="ECO:0007669"/>
    <property type="project" value="TreeGrafter"/>
</dbReference>
<dbReference type="GO" id="GO:0008690">
    <property type="term" value="F:3-deoxy-manno-octulosonate cytidylyltransferase activity"/>
    <property type="evidence" value="ECO:0007669"/>
    <property type="project" value="UniProtKB-UniRule"/>
</dbReference>
<dbReference type="GO" id="GO:0033468">
    <property type="term" value="P:CMP-keto-3-deoxy-D-manno-octulosonic acid biosynthetic process"/>
    <property type="evidence" value="ECO:0007669"/>
    <property type="project" value="UniProtKB-UniRule"/>
</dbReference>
<dbReference type="GO" id="GO:0009103">
    <property type="term" value="P:lipopolysaccharide biosynthetic process"/>
    <property type="evidence" value="ECO:0007669"/>
    <property type="project" value="UniProtKB-UniRule"/>
</dbReference>
<dbReference type="CDD" id="cd02517">
    <property type="entry name" value="CMP-KDO-Synthetase"/>
    <property type="match status" value="1"/>
</dbReference>
<dbReference type="Gene3D" id="3.90.550.10">
    <property type="entry name" value="Spore Coat Polysaccharide Biosynthesis Protein SpsA, Chain A"/>
    <property type="match status" value="1"/>
</dbReference>
<dbReference type="HAMAP" id="MF_00057">
    <property type="entry name" value="KdsB"/>
    <property type="match status" value="1"/>
</dbReference>
<dbReference type="InterPro" id="IPR003329">
    <property type="entry name" value="Cytidylyl_trans"/>
</dbReference>
<dbReference type="InterPro" id="IPR004528">
    <property type="entry name" value="KdsB"/>
</dbReference>
<dbReference type="InterPro" id="IPR029044">
    <property type="entry name" value="Nucleotide-diphossugar_trans"/>
</dbReference>
<dbReference type="NCBIfam" id="TIGR00466">
    <property type="entry name" value="kdsB"/>
    <property type="match status" value="1"/>
</dbReference>
<dbReference type="NCBIfam" id="NF003948">
    <property type="entry name" value="PRK05450.1-1"/>
    <property type="match status" value="1"/>
</dbReference>
<dbReference type="NCBIfam" id="NF003952">
    <property type="entry name" value="PRK05450.1-5"/>
    <property type="match status" value="1"/>
</dbReference>
<dbReference type="PANTHER" id="PTHR42866">
    <property type="entry name" value="3-DEOXY-MANNO-OCTULOSONATE CYTIDYLYLTRANSFERASE"/>
    <property type="match status" value="1"/>
</dbReference>
<dbReference type="PANTHER" id="PTHR42866:SF2">
    <property type="entry name" value="3-DEOXY-MANNO-OCTULOSONATE CYTIDYLYLTRANSFERASE, MITOCHONDRIAL"/>
    <property type="match status" value="1"/>
</dbReference>
<dbReference type="Pfam" id="PF02348">
    <property type="entry name" value="CTP_transf_3"/>
    <property type="match status" value="1"/>
</dbReference>
<dbReference type="SUPFAM" id="SSF53448">
    <property type="entry name" value="Nucleotide-diphospho-sugar transferases"/>
    <property type="match status" value="1"/>
</dbReference>
<name>KDSB_BRUSU</name>
<feature type="chain" id="PRO_0000370017" description="3-deoxy-manno-octulosonate cytidylyltransferase">
    <location>
        <begin position="1"/>
        <end position="251"/>
    </location>
</feature>
<proteinExistence type="inferred from homology"/>
<sequence length="251" mass="27334">MLQTMKTLTLIPTRLGSTRLPNKPLADICGKPMIVHVADRAAAAKLGRTVIATDSEEIFKVVAAHGHEAIMTRGDHESGSDRIYEALAKLDPSGEIDAVVNVQGDLPTIDPDTIRRALLPLEDGPADIATLGVEITVEEEKTNPNVVKIVGSPLAGNRRLRALYFTRATAPYGEGPLYHHIGLYAYRRSALERFVKLGPSPLEKREKLEQLRALEAGMRIDVEIVKTVPLGVDTQADLDRARTFCSQAGTI</sequence>
<gene>
    <name evidence="1" type="primary">kdsB</name>
    <name type="ordered locus">BR0038</name>
    <name type="ordered locus">BS1330_I0038</name>
</gene>
<protein>
    <recommendedName>
        <fullName evidence="1">3-deoxy-manno-octulosonate cytidylyltransferase</fullName>
        <ecNumber evidence="1">2.7.7.38</ecNumber>
    </recommendedName>
    <alternativeName>
        <fullName evidence="1">CMP-2-keto-3-deoxyoctulosonic acid synthase</fullName>
        <shortName evidence="1">CKS</shortName>
        <shortName evidence="1">CMP-KDO synthase</shortName>
    </alternativeName>
</protein>
<evidence type="ECO:0000255" key="1">
    <source>
        <dbReference type="HAMAP-Rule" id="MF_00057"/>
    </source>
</evidence>
<accession>Q8G3B2</accession>
<accession>G0KAL0</accession>
<organism>
    <name type="scientific">Brucella suis biovar 1 (strain 1330)</name>
    <dbReference type="NCBI Taxonomy" id="204722"/>
    <lineage>
        <taxon>Bacteria</taxon>
        <taxon>Pseudomonadati</taxon>
        <taxon>Pseudomonadota</taxon>
        <taxon>Alphaproteobacteria</taxon>
        <taxon>Hyphomicrobiales</taxon>
        <taxon>Brucellaceae</taxon>
        <taxon>Brucella/Ochrobactrum group</taxon>
        <taxon>Brucella</taxon>
    </lineage>
</organism>
<comment type="function">
    <text evidence="1">Activates KDO (a required 8-carbon sugar) for incorporation into bacterial lipopolysaccharide in Gram-negative bacteria.</text>
</comment>
<comment type="catalytic activity">
    <reaction evidence="1">
        <text>3-deoxy-alpha-D-manno-oct-2-ulosonate + CTP = CMP-3-deoxy-beta-D-manno-octulosonate + diphosphate</text>
        <dbReference type="Rhea" id="RHEA:23448"/>
        <dbReference type="ChEBI" id="CHEBI:33019"/>
        <dbReference type="ChEBI" id="CHEBI:37563"/>
        <dbReference type="ChEBI" id="CHEBI:85986"/>
        <dbReference type="ChEBI" id="CHEBI:85987"/>
        <dbReference type="EC" id="2.7.7.38"/>
    </reaction>
</comment>
<comment type="pathway">
    <text evidence="1">Nucleotide-sugar biosynthesis; CMP-3-deoxy-D-manno-octulosonate biosynthesis; CMP-3-deoxy-D-manno-octulosonate from 3-deoxy-D-manno-octulosonate and CTP: step 1/1.</text>
</comment>
<comment type="pathway">
    <text evidence="1">Bacterial outer membrane biogenesis; lipopolysaccharide biosynthesis.</text>
</comment>
<comment type="subcellular location">
    <subcellularLocation>
        <location evidence="1">Cytoplasm</location>
    </subcellularLocation>
</comment>
<comment type="similarity">
    <text evidence="1">Belongs to the KdsB family.</text>
</comment>
<keyword id="KW-0963">Cytoplasm</keyword>
<keyword id="KW-0448">Lipopolysaccharide biosynthesis</keyword>
<keyword id="KW-0548">Nucleotidyltransferase</keyword>
<keyword id="KW-0808">Transferase</keyword>